<feature type="chain" id="PRO_0000111951" description="ATP-dependent 6-phosphofructokinase isozyme 1">
    <location>
        <begin position="1"/>
        <end position="320"/>
    </location>
</feature>
<feature type="active site" description="Proton acceptor" evidence="1">
    <location>
        <position position="128"/>
    </location>
</feature>
<feature type="binding site" evidence="1">
    <location>
        <position position="12"/>
    </location>
    <ligand>
        <name>ATP</name>
        <dbReference type="ChEBI" id="CHEBI:30616"/>
    </ligand>
</feature>
<feature type="binding site" evidence="1">
    <location>
        <begin position="22"/>
        <end position="26"/>
    </location>
    <ligand>
        <name>ADP</name>
        <dbReference type="ChEBI" id="CHEBI:456216"/>
        <note>allosteric activator; ligand shared between dimeric partners</note>
    </ligand>
</feature>
<feature type="binding site" evidence="1">
    <location>
        <begin position="55"/>
        <end position="60"/>
    </location>
    <ligand>
        <name>ADP</name>
        <dbReference type="ChEBI" id="CHEBI:456216"/>
        <note>allosteric activator; ligand shared between dimeric partners</note>
    </ligand>
</feature>
<feature type="binding site" evidence="1">
    <location>
        <begin position="73"/>
        <end position="74"/>
    </location>
    <ligand>
        <name>ATP</name>
        <dbReference type="ChEBI" id="CHEBI:30616"/>
    </ligand>
</feature>
<feature type="binding site" evidence="1">
    <location>
        <begin position="103"/>
        <end position="106"/>
    </location>
    <ligand>
        <name>ATP</name>
        <dbReference type="ChEBI" id="CHEBI:30616"/>
    </ligand>
</feature>
<feature type="binding site" evidence="1">
    <location>
        <position position="104"/>
    </location>
    <ligand>
        <name>Mg(2+)</name>
        <dbReference type="ChEBI" id="CHEBI:18420"/>
        <note>catalytic</note>
    </ligand>
</feature>
<feature type="binding site" description="in other chain" evidence="1">
    <location>
        <begin position="126"/>
        <end position="128"/>
    </location>
    <ligand>
        <name>substrate</name>
        <note>ligand shared between dimeric partners</note>
    </ligand>
</feature>
<feature type="binding site" description="in other chain" evidence="1">
    <location>
        <position position="155"/>
    </location>
    <ligand>
        <name>ADP</name>
        <dbReference type="ChEBI" id="CHEBI:456216"/>
        <note>allosteric activator; ligand shared between dimeric partners</note>
    </ligand>
</feature>
<feature type="binding site" evidence="1">
    <location>
        <position position="163"/>
    </location>
    <ligand>
        <name>substrate</name>
        <note>ligand shared between dimeric partners</note>
    </ligand>
</feature>
<feature type="binding site" description="in other chain" evidence="1">
    <location>
        <begin position="170"/>
        <end position="172"/>
    </location>
    <ligand>
        <name>substrate</name>
        <note>ligand shared between dimeric partners</note>
    </ligand>
</feature>
<feature type="binding site" description="in other chain" evidence="1">
    <location>
        <begin position="186"/>
        <end position="188"/>
    </location>
    <ligand>
        <name>ADP</name>
        <dbReference type="ChEBI" id="CHEBI:456216"/>
        <note>allosteric activator; ligand shared between dimeric partners</note>
    </ligand>
</feature>
<feature type="binding site" description="in other chain" evidence="1">
    <location>
        <position position="212"/>
    </location>
    <ligand>
        <name>ADP</name>
        <dbReference type="ChEBI" id="CHEBI:456216"/>
        <note>allosteric activator; ligand shared between dimeric partners</note>
    </ligand>
</feature>
<feature type="binding site" description="in other chain" evidence="1">
    <location>
        <begin position="214"/>
        <end position="216"/>
    </location>
    <ligand>
        <name>ADP</name>
        <dbReference type="ChEBI" id="CHEBI:456216"/>
        <note>allosteric activator; ligand shared between dimeric partners</note>
    </ligand>
</feature>
<feature type="binding site" description="in other chain" evidence="1">
    <location>
        <position position="223"/>
    </location>
    <ligand>
        <name>substrate</name>
        <note>ligand shared between dimeric partners</note>
    </ligand>
</feature>
<feature type="binding site" evidence="1">
    <location>
        <position position="244"/>
    </location>
    <ligand>
        <name>substrate</name>
        <note>ligand shared between dimeric partners</note>
    </ligand>
</feature>
<feature type="binding site" description="in other chain" evidence="1">
    <location>
        <begin position="250"/>
        <end position="253"/>
    </location>
    <ligand>
        <name>substrate</name>
        <note>ligand shared between dimeric partners</note>
    </ligand>
</feature>
<protein>
    <recommendedName>
        <fullName evidence="1">ATP-dependent 6-phosphofructokinase isozyme 1</fullName>
        <shortName evidence="1">ATP-PFK 1</shortName>
        <shortName evidence="1">Phosphofructokinase 1</shortName>
        <ecNumber evidence="1">2.7.1.11</ecNumber>
    </recommendedName>
    <alternativeName>
        <fullName>6-phosphofructokinase isozyme I</fullName>
    </alternativeName>
    <alternativeName>
        <fullName evidence="1">Phosphohexokinase 1</fullName>
    </alternativeName>
</protein>
<keyword id="KW-0021">Allosteric enzyme</keyword>
<keyword id="KW-0067">ATP-binding</keyword>
<keyword id="KW-0963">Cytoplasm</keyword>
<keyword id="KW-0324">Glycolysis</keyword>
<keyword id="KW-0418">Kinase</keyword>
<keyword id="KW-0460">Magnesium</keyword>
<keyword id="KW-0479">Metal-binding</keyword>
<keyword id="KW-0547">Nucleotide-binding</keyword>
<keyword id="KW-1185">Reference proteome</keyword>
<keyword id="KW-0808">Transferase</keyword>
<evidence type="ECO:0000255" key="1">
    <source>
        <dbReference type="HAMAP-Rule" id="MF_00339"/>
    </source>
</evidence>
<organism>
    <name type="scientific">Escherichia coli O157:H7</name>
    <dbReference type="NCBI Taxonomy" id="83334"/>
    <lineage>
        <taxon>Bacteria</taxon>
        <taxon>Pseudomonadati</taxon>
        <taxon>Pseudomonadota</taxon>
        <taxon>Gammaproteobacteria</taxon>
        <taxon>Enterobacterales</taxon>
        <taxon>Enterobacteriaceae</taxon>
        <taxon>Escherichia</taxon>
    </lineage>
</organism>
<gene>
    <name evidence="1" type="primary">pfkA</name>
    <name type="ordered locus">Z5460</name>
    <name type="ordered locus">ECs4841</name>
</gene>
<comment type="function">
    <text evidence="1">Catalyzes the phosphorylation of D-fructose 6-phosphate to fructose 1,6-bisphosphate by ATP, the first committing step of glycolysis.</text>
</comment>
<comment type="catalytic activity">
    <reaction evidence="1">
        <text>beta-D-fructose 6-phosphate + ATP = beta-D-fructose 1,6-bisphosphate + ADP + H(+)</text>
        <dbReference type="Rhea" id="RHEA:16109"/>
        <dbReference type="ChEBI" id="CHEBI:15378"/>
        <dbReference type="ChEBI" id="CHEBI:30616"/>
        <dbReference type="ChEBI" id="CHEBI:32966"/>
        <dbReference type="ChEBI" id="CHEBI:57634"/>
        <dbReference type="ChEBI" id="CHEBI:456216"/>
        <dbReference type="EC" id="2.7.1.11"/>
    </reaction>
</comment>
<comment type="cofactor">
    <cofactor evidence="1">
        <name>Mg(2+)</name>
        <dbReference type="ChEBI" id="CHEBI:18420"/>
    </cofactor>
</comment>
<comment type="activity regulation">
    <text evidence="1">Allosterically activated by ADP and other diphosphonucleosides, and allosterically inhibited by phosphoenolpyruvate.</text>
</comment>
<comment type="pathway">
    <text evidence="1">Carbohydrate degradation; glycolysis; D-glyceraldehyde 3-phosphate and glycerone phosphate from D-glucose: step 3/4.</text>
</comment>
<comment type="subunit">
    <text evidence="1">Homotetramer.</text>
</comment>
<comment type="subcellular location">
    <subcellularLocation>
        <location evidence="1">Cytoplasm</location>
    </subcellularLocation>
</comment>
<comment type="similarity">
    <text evidence="1">Belongs to the phosphofructokinase type A (PFKA) family. ATP-dependent PFK group I subfamily. Prokaryotic clade 'B1' sub-subfamily.</text>
</comment>
<name>PFKA_ECO57</name>
<accession>P0A797</accession>
<accession>P06998</accession>
<sequence>MIKKIGVLTSGGDAPGMNAAIRGVVRSALTEGLEVMGIYDGYLGLYEDRMVQLDRYSVSDMINRGGTFLGSARFPEFRDENIRAVAIENLKKRGIDALVVIGGDGSYMGAMRLTEMGFPCIGLPGTIDNDIKGTDYTIGFFTALSTVVEAIDRLRDTSSSHQRISVVEVMGRYCGDLTLAAAIAGGCEFVVVPEVEFSREDLVNEIKAGIAKGKKHAIVAITEHMCDVDELAHFIEKETGRETRATVLGHIQRGGSPVPYDRILASRMGAYAIDLLLAGYGGRCVGIQNEQLVHHDIIDAIENMKRPFKGDWLDCAKKLY</sequence>
<dbReference type="EC" id="2.7.1.11" evidence="1"/>
<dbReference type="EMBL" id="AE005174">
    <property type="protein sequence ID" value="AAG59109.1"/>
    <property type="molecule type" value="Genomic_DNA"/>
</dbReference>
<dbReference type="EMBL" id="BA000007">
    <property type="protein sequence ID" value="BAB38264.1"/>
    <property type="molecule type" value="Genomic_DNA"/>
</dbReference>
<dbReference type="PIR" id="A86081">
    <property type="entry name" value="A86081"/>
</dbReference>
<dbReference type="PIR" id="A98234">
    <property type="entry name" value="A98234"/>
</dbReference>
<dbReference type="RefSeq" id="NP_312868.1">
    <property type="nucleotide sequence ID" value="NC_002695.1"/>
</dbReference>
<dbReference type="RefSeq" id="WP_000591795.1">
    <property type="nucleotide sequence ID" value="NZ_VOAI01000016.1"/>
</dbReference>
<dbReference type="SMR" id="P0A797"/>
<dbReference type="STRING" id="155864.Z5460"/>
<dbReference type="GeneID" id="915060"/>
<dbReference type="GeneID" id="93777982"/>
<dbReference type="KEGG" id="ece:Z5460"/>
<dbReference type="KEGG" id="ecs:ECs_4841"/>
<dbReference type="PATRIC" id="fig|386585.9.peg.5062"/>
<dbReference type="eggNOG" id="COG0205">
    <property type="taxonomic scope" value="Bacteria"/>
</dbReference>
<dbReference type="HOGENOM" id="CLU_020655_0_1_6"/>
<dbReference type="OMA" id="GYQGMIE"/>
<dbReference type="BioCyc" id="MetaCyc:MONOMER-18281"/>
<dbReference type="UniPathway" id="UPA00109">
    <property type="reaction ID" value="UER00182"/>
</dbReference>
<dbReference type="Proteomes" id="UP000000558">
    <property type="component" value="Chromosome"/>
</dbReference>
<dbReference type="Proteomes" id="UP000002519">
    <property type="component" value="Chromosome"/>
</dbReference>
<dbReference type="GO" id="GO:0005945">
    <property type="term" value="C:6-phosphofructokinase complex"/>
    <property type="evidence" value="ECO:0007669"/>
    <property type="project" value="TreeGrafter"/>
</dbReference>
<dbReference type="GO" id="GO:0003872">
    <property type="term" value="F:6-phosphofructokinase activity"/>
    <property type="evidence" value="ECO:0007669"/>
    <property type="project" value="UniProtKB-UniRule"/>
</dbReference>
<dbReference type="GO" id="GO:0016208">
    <property type="term" value="F:AMP binding"/>
    <property type="evidence" value="ECO:0007669"/>
    <property type="project" value="TreeGrafter"/>
</dbReference>
<dbReference type="GO" id="GO:0005524">
    <property type="term" value="F:ATP binding"/>
    <property type="evidence" value="ECO:0007669"/>
    <property type="project" value="UniProtKB-KW"/>
</dbReference>
<dbReference type="GO" id="GO:0070095">
    <property type="term" value="F:fructose-6-phosphate binding"/>
    <property type="evidence" value="ECO:0007669"/>
    <property type="project" value="TreeGrafter"/>
</dbReference>
<dbReference type="GO" id="GO:0042802">
    <property type="term" value="F:identical protein binding"/>
    <property type="evidence" value="ECO:0007669"/>
    <property type="project" value="TreeGrafter"/>
</dbReference>
<dbReference type="GO" id="GO:0046872">
    <property type="term" value="F:metal ion binding"/>
    <property type="evidence" value="ECO:0007669"/>
    <property type="project" value="UniProtKB-KW"/>
</dbReference>
<dbReference type="GO" id="GO:0048029">
    <property type="term" value="F:monosaccharide binding"/>
    <property type="evidence" value="ECO:0007669"/>
    <property type="project" value="TreeGrafter"/>
</dbReference>
<dbReference type="GO" id="GO:0061621">
    <property type="term" value="P:canonical glycolysis"/>
    <property type="evidence" value="ECO:0007669"/>
    <property type="project" value="TreeGrafter"/>
</dbReference>
<dbReference type="GO" id="GO:0030388">
    <property type="term" value="P:fructose 1,6-bisphosphate metabolic process"/>
    <property type="evidence" value="ECO:0007669"/>
    <property type="project" value="TreeGrafter"/>
</dbReference>
<dbReference type="GO" id="GO:0006002">
    <property type="term" value="P:fructose 6-phosphate metabolic process"/>
    <property type="evidence" value="ECO:0007669"/>
    <property type="project" value="InterPro"/>
</dbReference>
<dbReference type="CDD" id="cd00763">
    <property type="entry name" value="Bacterial_PFK"/>
    <property type="match status" value="1"/>
</dbReference>
<dbReference type="FunFam" id="3.40.50.450:FF:000001">
    <property type="entry name" value="ATP-dependent 6-phosphofructokinase"/>
    <property type="match status" value="1"/>
</dbReference>
<dbReference type="FunFam" id="3.40.50.460:FF:000002">
    <property type="entry name" value="ATP-dependent 6-phosphofructokinase"/>
    <property type="match status" value="1"/>
</dbReference>
<dbReference type="Gene3D" id="3.40.50.450">
    <property type="match status" value="1"/>
</dbReference>
<dbReference type="Gene3D" id="3.40.50.460">
    <property type="entry name" value="Phosphofructokinase domain"/>
    <property type="match status" value="1"/>
</dbReference>
<dbReference type="HAMAP" id="MF_00339">
    <property type="entry name" value="Phosphofructokinase_I_B1"/>
    <property type="match status" value="1"/>
</dbReference>
<dbReference type="InterPro" id="IPR022953">
    <property type="entry name" value="ATP_PFK"/>
</dbReference>
<dbReference type="InterPro" id="IPR012003">
    <property type="entry name" value="ATP_PFK_prok-type"/>
</dbReference>
<dbReference type="InterPro" id="IPR012828">
    <property type="entry name" value="PFKA_ATP_prok"/>
</dbReference>
<dbReference type="InterPro" id="IPR015912">
    <property type="entry name" value="Phosphofructokinase_CS"/>
</dbReference>
<dbReference type="InterPro" id="IPR000023">
    <property type="entry name" value="Phosphofructokinase_dom"/>
</dbReference>
<dbReference type="InterPro" id="IPR035966">
    <property type="entry name" value="PKF_sf"/>
</dbReference>
<dbReference type="NCBIfam" id="TIGR02482">
    <property type="entry name" value="PFKA_ATP"/>
    <property type="match status" value="1"/>
</dbReference>
<dbReference type="NCBIfam" id="NF002872">
    <property type="entry name" value="PRK03202.1"/>
    <property type="match status" value="1"/>
</dbReference>
<dbReference type="PANTHER" id="PTHR13697:SF4">
    <property type="entry name" value="ATP-DEPENDENT 6-PHOSPHOFRUCTOKINASE"/>
    <property type="match status" value="1"/>
</dbReference>
<dbReference type="PANTHER" id="PTHR13697">
    <property type="entry name" value="PHOSPHOFRUCTOKINASE"/>
    <property type="match status" value="1"/>
</dbReference>
<dbReference type="Pfam" id="PF00365">
    <property type="entry name" value="PFK"/>
    <property type="match status" value="1"/>
</dbReference>
<dbReference type="PIRSF" id="PIRSF000532">
    <property type="entry name" value="ATP_PFK_prok"/>
    <property type="match status" value="1"/>
</dbReference>
<dbReference type="PRINTS" id="PR00476">
    <property type="entry name" value="PHFRCTKINASE"/>
</dbReference>
<dbReference type="SUPFAM" id="SSF53784">
    <property type="entry name" value="Phosphofructokinase"/>
    <property type="match status" value="1"/>
</dbReference>
<dbReference type="PROSITE" id="PS00433">
    <property type="entry name" value="PHOSPHOFRUCTOKINASE"/>
    <property type="match status" value="1"/>
</dbReference>
<proteinExistence type="inferred from homology"/>
<reference key="1">
    <citation type="journal article" date="2001" name="Nature">
        <title>Genome sequence of enterohaemorrhagic Escherichia coli O157:H7.</title>
        <authorList>
            <person name="Perna N.T."/>
            <person name="Plunkett G. III"/>
            <person name="Burland V."/>
            <person name="Mau B."/>
            <person name="Glasner J.D."/>
            <person name="Rose D.J."/>
            <person name="Mayhew G.F."/>
            <person name="Evans P.S."/>
            <person name="Gregor J."/>
            <person name="Kirkpatrick H.A."/>
            <person name="Posfai G."/>
            <person name="Hackett J."/>
            <person name="Klink S."/>
            <person name="Boutin A."/>
            <person name="Shao Y."/>
            <person name="Miller L."/>
            <person name="Grotbeck E.J."/>
            <person name="Davis N.W."/>
            <person name="Lim A."/>
            <person name="Dimalanta E.T."/>
            <person name="Potamousis K."/>
            <person name="Apodaca J."/>
            <person name="Anantharaman T.S."/>
            <person name="Lin J."/>
            <person name="Yen G."/>
            <person name="Schwartz D.C."/>
            <person name="Welch R.A."/>
            <person name="Blattner F.R."/>
        </authorList>
    </citation>
    <scope>NUCLEOTIDE SEQUENCE [LARGE SCALE GENOMIC DNA]</scope>
    <source>
        <strain>O157:H7 / EDL933 / ATCC 700927 / EHEC</strain>
    </source>
</reference>
<reference key="2">
    <citation type="journal article" date="2001" name="DNA Res.">
        <title>Complete genome sequence of enterohemorrhagic Escherichia coli O157:H7 and genomic comparison with a laboratory strain K-12.</title>
        <authorList>
            <person name="Hayashi T."/>
            <person name="Makino K."/>
            <person name="Ohnishi M."/>
            <person name="Kurokawa K."/>
            <person name="Ishii K."/>
            <person name="Yokoyama K."/>
            <person name="Han C.-G."/>
            <person name="Ohtsubo E."/>
            <person name="Nakayama K."/>
            <person name="Murata T."/>
            <person name="Tanaka M."/>
            <person name="Tobe T."/>
            <person name="Iida T."/>
            <person name="Takami H."/>
            <person name="Honda T."/>
            <person name="Sasakawa C."/>
            <person name="Ogasawara N."/>
            <person name="Yasunaga T."/>
            <person name="Kuhara S."/>
            <person name="Shiba T."/>
            <person name="Hattori M."/>
            <person name="Shinagawa H."/>
        </authorList>
    </citation>
    <scope>NUCLEOTIDE SEQUENCE [LARGE SCALE GENOMIC DNA]</scope>
    <source>
        <strain>O157:H7 / Sakai / RIMD 0509952 / EHEC</strain>
    </source>
</reference>